<organism>
    <name type="scientific">Saccharomyces cerevisiae (strain ATCC 204508 / S288c)</name>
    <name type="common">Baker's yeast</name>
    <dbReference type="NCBI Taxonomy" id="559292"/>
    <lineage>
        <taxon>Eukaryota</taxon>
        <taxon>Fungi</taxon>
        <taxon>Dikarya</taxon>
        <taxon>Ascomycota</taxon>
        <taxon>Saccharomycotina</taxon>
        <taxon>Saccharomycetes</taxon>
        <taxon>Saccharomycetales</taxon>
        <taxon>Saccharomycetaceae</taxon>
        <taxon>Saccharomyces</taxon>
    </lineage>
</organism>
<name>GAL10_YEAST</name>
<accession>P04397</accession>
<accession>D6VQ21</accession>
<accession>Q05765</accession>
<sequence>MTAQLQSESTSKIVLVTGGAGYIGSHTVVELIENGYDCVVADNLSNSTYDSVARLEVLTKHHIPFYEVDLCDRKGLEKVFKEYKIDSVIHFAGLKAVGESTQIPLRYYHNNILGTVVLLELMQQYNVSKFVFSSSATVYGDATRFPNMIPIPEECPLGPTNPYGHTKYAIENILNDLYNSDKKSWKFAILRYFNPIGAHPSGLIGEDPLGIPNNLLPYMAQVAVGRREKLYIFGDDYDSRDGTPIRDYIHVVDLAKGHIAALQYLEAYNENEGLCREWNLGSGKGSTVFEVYHAFCKASGIDLPYKVTGRRAGDVLNLTAKPDRAKRELKWQTELQVEDSCKDLWKWTTENPFGYQLRGVEARFSAEDMRYDARFVTIGAGTRFQATFANLGASIVDLKVNGQSVVLGYENEEGYLNPDSAYIGATIGRYANRISKGKFSLCNKDYQLTVNNGVNANHSSIGSFHRKRFLGPIIQNPSKDVFTAEYMLIDNEKDTEFPGDLLVTIQYTVNVAQKSLEMVYKGKLTAGEATPINLTNHSYFNLNKPYGDTIEGTEIMVRSKKSVDVDKNMIPTGNIVDREIATFNSTKPTVLGPKNPQFDCCFVVDENAKPSQINTLNNELTLIVKAFHPDSNITLEVLSTEPTYQFYTGDFLSAGYEARQGFAIEPGRYIDAINQENWKDCVTLKNGETYGSKIVYRFS</sequence>
<keyword id="KW-0002">3D-structure</keyword>
<keyword id="KW-0119">Carbohydrate metabolism</keyword>
<keyword id="KW-0299">Galactose metabolism</keyword>
<keyword id="KW-0413">Isomerase</keyword>
<keyword id="KW-0511">Multifunctional enzyme</keyword>
<keyword id="KW-0520">NAD</keyword>
<keyword id="KW-0597">Phosphoprotein</keyword>
<keyword id="KW-1185">Reference proteome</keyword>
<comment type="function">
    <text evidence="1">Mutarotase converts alpha-aldose to the beta-anomer. It is active on D-glucose, L-arabinose, D-xylose, D-galactose, maltose and lactose (By similarity).</text>
</comment>
<comment type="catalytic activity">
    <reaction>
        <text>UDP-alpha-D-glucose = UDP-alpha-D-galactose</text>
        <dbReference type="Rhea" id="RHEA:22168"/>
        <dbReference type="ChEBI" id="CHEBI:58885"/>
        <dbReference type="ChEBI" id="CHEBI:66914"/>
        <dbReference type="EC" id="5.1.3.2"/>
    </reaction>
</comment>
<comment type="catalytic activity">
    <reaction evidence="3">
        <text>alpha-D-glucose = beta-D-glucose</text>
        <dbReference type="Rhea" id="RHEA:10264"/>
        <dbReference type="ChEBI" id="CHEBI:15903"/>
        <dbReference type="ChEBI" id="CHEBI:17925"/>
        <dbReference type="EC" id="5.1.3.3"/>
    </reaction>
</comment>
<comment type="cofactor">
    <cofactor>
        <name>NAD(+)</name>
        <dbReference type="ChEBI" id="CHEBI:57540"/>
    </cofactor>
</comment>
<comment type="pathway">
    <text>Carbohydrate metabolism; galactose metabolism.</text>
</comment>
<comment type="pathway">
    <text>Carbohydrate metabolism; hexose metabolism.</text>
</comment>
<comment type="induction">
    <text>By galactose.</text>
</comment>
<comment type="similarity">
    <text evidence="4">In the N-terminal section; belongs to the NAD(P)-dependent epimerase/dehydratase family.</text>
</comment>
<comment type="similarity">
    <text evidence="4">In the C-terminal section; belongs to the aldose epimerase family.</text>
</comment>
<reference key="1">
    <citation type="journal article" date="1994" name="EMBO J.">
        <title>Complete DNA sequence of yeast chromosome II.</title>
        <authorList>
            <person name="Feldmann H."/>
            <person name="Aigle M."/>
            <person name="Aljinovic G."/>
            <person name="Andre B."/>
            <person name="Baclet M.C."/>
            <person name="Barthe C."/>
            <person name="Baur A."/>
            <person name="Becam A.-M."/>
            <person name="Biteau N."/>
            <person name="Boles E."/>
            <person name="Brandt T."/>
            <person name="Brendel M."/>
            <person name="Brueckner M."/>
            <person name="Bussereau F."/>
            <person name="Christiansen C."/>
            <person name="Contreras R."/>
            <person name="Crouzet M."/>
            <person name="Cziepluch C."/>
            <person name="Demolis N."/>
            <person name="Delaveau T."/>
            <person name="Doignon F."/>
            <person name="Domdey H."/>
            <person name="Duesterhus S."/>
            <person name="Dubois E."/>
            <person name="Dujon B."/>
            <person name="El Bakkoury M."/>
            <person name="Entian K.-D."/>
            <person name="Feuermann M."/>
            <person name="Fiers W."/>
            <person name="Fobo G.M."/>
            <person name="Fritz C."/>
            <person name="Gassenhuber J."/>
            <person name="Glansdorff N."/>
            <person name="Goffeau A."/>
            <person name="Grivell L.A."/>
            <person name="de Haan M."/>
            <person name="Hein C."/>
            <person name="Herbert C.J."/>
            <person name="Hollenberg C.P."/>
            <person name="Holmstroem K."/>
            <person name="Jacq C."/>
            <person name="Jacquet M."/>
            <person name="Jauniaux J.-C."/>
            <person name="Jonniaux J.-L."/>
            <person name="Kallesoee T."/>
            <person name="Kiesau P."/>
            <person name="Kirchrath L."/>
            <person name="Koetter P."/>
            <person name="Korol S."/>
            <person name="Liebl S."/>
            <person name="Logghe M."/>
            <person name="Lohan A.J.E."/>
            <person name="Louis E.J."/>
            <person name="Li Z.Y."/>
            <person name="Maat M.J."/>
            <person name="Mallet L."/>
            <person name="Mannhaupt G."/>
            <person name="Messenguy F."/>
            <person name="Miosga T."/>
            <person name="Molemans F."/>
            <person name="Mueller S."/>
            <person name="Nasr F."/>
            <person name="Obermaier B."/>
            <person name="Perea J."/>
            <person name="Pierard A."/>
            <person name="Piravandi E."/>
            <person name="Pohl F.M."/>
            <person name="Pohl T.M."/>
            <person name="Potier S."/>
            <person name="Proft M."/>
            <person name="Purnelle B."/>
            <person name="Ramezani Rad M."/>
            <person name="Rieger M."/>
            <person name="Rose M."/>
            <person name="Schaaff-Gerstenschlaeger I."/>
            <person name="Scherens B."/>
            <person name="Schwarzlose C."/>
            <person name="Skala J."/>
            <person name="Slonimski P.P."/>
            <person name="Smits P.H.M."/>
            <person name="Souciet J.-L."/>
            <person name="Steensma H.Y."/>
            <person name="Stucka R."/>
            <person name="Urrestarazu L.A."/>
            <person name="van der Aart Q.J.M."/>
            <person name="Van Dyck L."/>
            <person name="Vassarotti A."/>
            <person name="Vetter I."/>
            <person name="Vierendeels F."/>
            <person name="Vissers S."/>
            <person name="Wagner G."/>
            <person name="de Wergifosse P."/>
            <person name="Wolfe K.H."/>
            <person name="Zagulski M."/>
            <person name="Zimmermann F.K."/>
            <person name="Mewes H.-W."/>
            <person name="Kleine K."/>
        </authorList>
    </citation>
    <scope>NUCLEOTIDE SEQUENCE [LARGE SCALE GENOMIC DNA]</scope>
    <source>
        <strain>ATCC 204508 / S288c</strain>
    </source>
</reference>
<reference key="2">
    <citation type="journal article" date="2014" name="G3 (Bethesda)">
        <title>The reference genome sequence of Saccharomyces cerevisiae: Then and now.</title>
        <authorList>
            <person name="Engel S.R."/>
            <person name="Dietrich F.S."/>
            <person name="Fisk D.G."/>
            <person name="Binkley G."/>
            <person name="Balakrishnan R."/>
            <person name="Costanzo M.C."/>
            <person name="Dwight S.S."/>
            <person name="Hitz B.C."/>
            <person name="Karra K."/>
            <person name="Nash R.S."/>
            <person name="Weng S."/>
            <person name="Wong E.D."/>
            <person name="Lloyd P."/>
            <person name="Skrzypek M.S."/>
            <person name="Miyasato S.R."/>
            <person name="Simison M."/>
            <person name="Cherry J.M."/>
        </authorList>
    </citation>
    <scope>GENOME REANNOTATION</scope>
    <source>
        <strain>ATCC 204508 / S288c</strain>
    </source>
</reference>
<reference key="3">
    <citation type="journal article" date="1994" name="Yeast">
        <title>The complete sequence of a 33 kb fragment on the right arm of chromosome II from Saccharomyces cerevisiae reveals 16 open reading frames, including ten new open reading frames, five previously identified genes and a homologue of the SCO1 gene.</title>
        <authorList>
            <person name="Smits P.H.M."/>
            <person name="de Haan M."/>
            <person name="Maat C."/>
            <person name="Grivell L.A."/>
        </authorList>
    </citation>
    <scope>NUCLEOTIDE SEQUENCE [GENOMIC DNA] OF 1-500</scope>
    <source>
        <strain>ATCC 204508 / S288c</strain>
    </source>
</reference>
<reference key="4">
    <citation type="journal article" date="1995" name="Yeast">
        <title>Sequence and functional analysis of a 7.2 kb fragment of Saccharomyces cerevisiae chromosome II including GAL7 and GAL10 and a new essential open reading frame.</title>
        <authorList>
            <person name="Schaaff-Gerstenschlaeger I."/>
            <person name="Schindwolf T."/>
            <person name="Lehnert W."/>
            <person name="Rose M."/>
            <person name="Zimmermann F.K."/>
        </authorList>
    </citation>
    <scope>NUCLEOTIDE SEQUENCE [GENOMIC DNA] OF 134-699</scope>
    <source>
        <strain>ATCC 204508 / S288c</strain>
    </source>
</reference>
<reference key="5">
    <citation type="journal article" date="1984" name="J. Bacteriol.">
        <title>Sequence of the Saccharomyces GAL region and its transcription in vivo.</title>
        <authorList>
            <person name="Citron B.A."/>
            <person name="Donelson J.E."/>
        </authorList>
    </citation>
    <scope>NUCLEOTIDE SEQUENCE [GENOMIC DNA] OF 1-47 AND 302-699</scope>
    <source>
        <strain>Carlsbergensis</strain>
    </source>
</reference>
<reference key="6">
    <citation type="journal article" date="1984" name="Mol. Cell. Biol.">
        <title>Sequences that regulate the divergent GAL1-GAL10 promoter in Saccharomyces cerevisiae.</title>
        <authorList>
            <person name="Johnston M."/>
            <person name="Davis R.W."/>
        </authorList>
    </citation>
    <scope>NUCLEOTIDE SEQUENCE [GENOMIC DNA] OF 1-46</scope>
</reference>
<reference key="7">
    <citation type="journal article" date="1985" name="Yeast">
        <title>Primary structure of the Saccharomyces cerevisiae GAL7 gene.</title>
        <authorList>
            <person name="Tajima M."/>
            <person name="Nogi Y."/>
            <person name="Fukasawa T."/>
        </authorList>
    </citation>
    <scope>NUCLEOTIDE SEQUENCE [GENOMIC DNA] OF 630-699</scope>
</reference>
<reference key="8">
    <citation type="journal article" date="2009" name="Science">
        <title>Global analysis of Cdk1 substrate phosphorylation sites provides insights into evolution.</title>
        <authorList>
            <person name="Holt L.J."/>
            <person name="Tuch B.B."/>
            <person name="Villen J."/>
            <person name="Johnson A.D."/>
            <person name="Gygi S.P."/>
            <person name="Morgan D.O."/>
        </authorList>
    </citation>
    <scope>PHOSPHORYLATION [LARGE SCALE ANALYSIS] AT SER-562</scope>
    <scope>IDENTIFICATION BY MASS SPECTROMETRY [LARGE SCALE ANALYSIS]</scope>
</reference>
<feature type="chain" id="PRO_0000197442" description="Bifunctional protein GAL10">
    <location>
        <begin position="1"/>
        <end position="699"/>
    </location>
</feature>
<feature type="region of interest" description="Galactowaldenase">
    <location>
        <begin position="1"/>
        <end position="357"/>
    </location>
</feature>
<feature type="region of interest" description="Mutarotase">
    <location>
        <begin position="358"/>
        <end position="699"/>
    </location>
</feature>
<feature type="active site" description="For mutarotase activity" evidence="2">
    <location>
        <position position="537"/>
    </location>
</feature>
<feature type="binding site" evidence="2">
    <location>
        <begin position="13"/>
        <end position="44"/>
    </location>
    <ligand>
        <name>NAD(+)</name>
        <dbReference type="ChEBI" id="CHEBI:57540"/>
    </ligand>
</feature>
<feature type="modified residue" description="Phosphoserine" evidence="5">
    <location>
        <position position="562"/>
    </location>
</feature>
<feature type="sequence conflict" description="In Ref. 5; AAA34629." evidence="4" ref="5">
    <original>DLPYK</original>
    <variation>WSSVR</variation>
    <location>
        <begin position="302"/>
        <end position="306"/>
    </location>
</feature>
<feature type="sequence conflict" description="In Ref. 5; AAA34629." evidence="4" ref="5">
    <original>F</original>
    <variation>L</variation>
    <location>
        <position position="464"/>
    </location>
</feature>
<feature type="sequence conflict" description="In Ref. 5; AAA34629." evidence="4" ref="5">
    <original>KD</original>
    <variation>NY</variation>
    <location>
        <begin position="479"/>
        <end position="480"/>
    </location>
</feature>
<feature type="sequence conflict" description="In Ref. 5; AAA34629." evidence="4" ref="5">
    <original>P</original>
    <variation>Q</variation>
    <location>
        <position position="498"/>
    </location>
</feature>
<feature type="sequence conflict" description="In Ref. 5; AAA34629." evidence="4" ref="5">
    <original>M</original>
    <variation>I</variation>
    <location>
        <position position="518"/>
    </location>
</feature>
<feature type="sequence conflict" description="In Ref. 5; AAA34629." evidence="4" ref="5">
    <original>G</original>
    <variation>C</variation>
    <location>
        <position position="667"/>
    </location>
</feature>
<feature type="sequence conflict" description="In Ref. 5; AAA34629." evidence="4" ref="5">
    <original>IV</original>
    <variation>TL</variation>
    <location>
        <begin position="694"/>
        <end position="695"/>
    </location>
</feature>
<feature type="strand" evidence="6">
    <location>
        <begin position="13"/>
        <end position="17"/>
    </location>
</feature>
<feature type="turn" evidence="6">
    <location>
        <begin position="18"/>
        <end position="20"/>
    </location>
</feature>
<feature type="helix" evidence="6">
    <location>
        <begin position="22"/>
        <end position="33"/>
    </location>
</feature>
<feature type="strand" evidence="6">
    <location>
        <begin position="37"/>
        <end position="42"/>
    </location>
</feature>
<feature type="helix" evidence="6">
    <location>
        <begin position="50"/>
        <end position="59"/>
    </location>
</feature>
<feature type="strand" evidence="6">
    <location>
        <begin position="65"/>
        <end position="67"/>
    </location>
</feature>
<feature type="helix" evidence="6">
    <location>
        <begin position="73"/>
        <end position="82"/>
    </location>
</feature>
<feature type="strand" evidence="6">
    <location>
        <begin position="87"/>
        <end position="90"/>
    </location>
</feature>
<feature type="helix" evidence="6">
    <location>
        <begin position="97"/>
        <end position="102"/>
    </location>
</feature>
<feature type="helix" evidence="6">
    <location>
        <begin position="104"/>
        <end position="125"/>
    </location>
</feature>
<feature type="strand" evidence="6">
    <location>
        <begin position="129"/>
        <end position="135"/>
    </location>
</feature>
<feature type="helix" evidence="6">
    <location>
        <begin position="136"/>
        <end position="139"/>
    </location>
</feature>
<feature type="helix" evidence="6">
    <location>
        <begin position="142"/>
        <end position="144"/>
    </location>
</feature>
<feature type="helix" evidence="6">
    <location>
        <begin position="162"/>
        <end position="180"/>
    </location>
</feature>
<feature type="strand" evidence="6">
    <location>
        <begin position="186"/>
        <end position="192"/>
    </location>
</feature>
<feature type="strand" evidence="6">
    <location>
        <begin position="194"/>
        <end position="196"/>
    </location>
</feature>
<feature type="strand" evidence="6">
    <location>
        <begin position="209"/>
        <end position="211"/>
    </location>
</feature>
<feature type="helix" evidence="6">
    <location>
        <begin position="215"/>
        <end position="223"/>
    </location>
</feature>
<feature type="strand" evidence="6">
    <location>
        <begin position="226"/>
        <end position="228"/>
    </location>
</feature>
<feature type="strand" evidence="6">
    <location>
        <begin position="248"/>
        <end position="250"/>
    </location>
</feature>
<feature type="helix" evidence="6">
    <location>
        <begin position="251"/>
        <end position="267"/>
    </location>
</feature>
<feature type="strand" evidence="6">
    <location>
        <begin position="274"/>
        <end position="281"/>
    </location>
</feature>
<feature type="helix" evidence="6">
    <location>
        <begin position="288"/>
        <end position="299"/>
    </location>
</feature>
<feature type="helix" evidence="6">
    <location>
        <begin position="323"/>
        <end position="328"/>
    </location>
</feature>
<feature type="helix" evidence="6">
    <location>
        <begin position="337"/>
        <end position="350"/>
    </location>
</feature>
<feature type="strand" evidence="6">
    <location>
        <begin position="360"/>
        <end position="367"/>
    </location>
</feature>
<feature type="strand" evidence="6">
    <location>
        <begin position="373"/>
        <end position="379"/>
    </location>
</feature>
<feature type="strand" evidence="6">
    <location>
        <begin position="382"/>
        <end position="391"/>
    </location>
</feature>
<feature type="strand" evidence="6">
    <location>
        <begin position="395"/>
        <end position="400"/>
    </location>
</feature>
<feature type="helix" evidence="6">
    <location>
        <begin position="412"/>
        <end position="415"/>
    </location>
</feature>
<feature type="strand" evidence="6">
    <location>
        <begin position="432"/>
        <end position="434"/>
    </location>
</feature>
<feature type="helix" evidence="6">
    <location>
        <begin position="435"/>
        <end position="437"/>
    </location>
</feature>
<feature type="strand" evidence="6">
    <location>
        <begin position="438"/>
        <end position="441"/>
    </location>
</feature>
<feature type="strand" evidence="6">
    <location>
        <begin position="444"/>
        <end position="447"/>
    </location>
</feature>
<feature type="strand" evidence="6">
    <location>
        <begin position="455"/>
        <end position="457"/>
    </location>
</feature>
<feature type="helix" evidence="6">
    <location>
        <begin position="460"/>
        <end position="462"/>
    </location>
</feature>
<feature type="helix" evidence="6">
    <location>
        <begin position="464"/>
        <end position="466"/>
    </location>
</feature>
<feature type="strand" evidence="6">
    <location>
        <begin position="470"/>
        <end position="478"/>
    </location>
</feature>
<feature type="strand" evidence="6">
    <location>
        <begin position="481"/>
        <end position="490"/>
    </location>
</feature>
<feature type="helix" evidence="6">
    <location>
        <begin position="492"/>
        <end position="494"/>
    </location>
</feature>
<feature type="strand" evidence="6">
    <location>
        <begin position="495"/>
        <end position="510"/>
    </location>
</feature>
<feature type="turn" evidence="6">
    <location>
        <begin position="511"/>
        <end position="514"/>
    </location>
</feature>
<feature type="strand" evidence="6">
    <location>
        <begin position="515"/>
        <end position="531"/>
    </location>
</feature>
<feature type="turn" evidence="6">
    <location>
        <begin position="542"/>
        <end position="545"/>
    </location>
</feature>
<feature type="strand" evidence="6">
    <location>
        <begin position="548"/>
        <end position="550"/>
    </location>
</feature>
<feature type="strand" evidence="6">
    <location>
        <begin position="553"/>
        <end position="558"/>
    </location>
</feature>
<feature type="strand" evidence="6">
    <location>
        <begin position="561"/>
        <end position="565"/>
    </location>
</feature>
<feature type="strand" evidence="6">
    <location>
        <begin position="571"/>
        <end position="577"/>
    </location>
</feature>
<feature type="strand" evidence="6">
    <location>
        <begin position="585"/>
        <end position="587"/>
    </location>
</feature>
<feature type="strand" evidence="6">
    <location>
        <begin position="589"/>
        <end position="591"/>
    </location>
</feature>
<feature type="strand" evidence="6">
    <location>
        <begin position="599"/>
        <end position="604"/>
    </location>
</feature>
<feature type="strand" evidence="6">
    <location>
        <begin position="621"/>
        <end position="627"/>
    </location>
</feature>
<feature type="turn" evidence="6">
    <location>
        <begin position="629"/>
        <end position="631"/>
    </location>
</feature>
<feature type="strand" evidence="6">
    <location>
        <begin position="634"/>
        <end position="647"/>
    </location>
</feature>
<feature type="strand" evidence="6">
    <location>
        <begin position="662"/>
        <end position="668"/>
    </location>
</feature>
<feature type="helix" evidence="6">
    <location>
        <begin position="672"/>
        <end position="674"/>
    </location>
</feature>
<feature type="turn" evidence="6">
    <location>
        <begin position="676"/>
        <end position="678"/>
    </location>
</feature>
<feature type="helix" evidence="6">
    <location>
        <begin position="679"/>
        <end position="682"/>
    </location>
</feature>
<feature type="strand" evidence="6">
    <location>
        <begin position="683"/>
        <end position="685"/>
    </location>
</feature>
<feature type="strand" evidence="6">
    <location>
        <begin position="689"/>
        <end position="699"/>
    </location>
</feature>
<protein>
    <recommendedName>
        <fullName>Bifunctional protein GAL10</fullName>
    </recommendedName>
    <domain>
        <recommendedName>
            <fullName>UDP-glucose 4-epimerase</fullName>
            <ecNumber>5.1.3.2</ecNumber>
        </recommendedName>
        <alternativeName>
            <fullName>Galactowaldenase</fullName>
        </alternativeName>
    </domain>
    <domain>
        <recommendedName>
            <fullName>Aldose 1-epimerase</fullName>
            <ecNumber>5.1.3.3</ecNumber>
        </recommendedName>
        <alternativeName>
            <fullName>Galactose mutarotase</fullName>
        </alternativeName>
    </domain>
</protein>
<proteinExistence type="evidence at protein level"/>
<gene>
    <name type="primary">GAL10</name>
    <name type="ordered locus">YBR019C</name>
    <name type="ORF">YBR0301</name>
</gene>
<dbReference type="EC" id="5.1.3.2"/>
<dbReference type="EC" id="5.1.3.3"/>
<dbReference type="EMBL" id="Z35888">
    <property type="protein sequence ID" value="CAA84961.1"/>
    <property type="molecule type" value="Genomic_DNA"/>
</dbReference>
<dbReference type="EMBL" id="X81324">
    <property type="protein sequence ID" value="CAA57106.1"/>
    <property type="molecule type" value="Genomic_DNA"/>
</dbReference>
<dbReference type="EMBL" id="K02115">
    <property type="protein sequence ID" value="AAA34620.1"/>
    <property type="molecule type" value="Genomic_DNA"/>
</dbReference>
<dbReference type="EMBL" id="M12348">
    <property type="status" value="NOT_ANNOTATED_CDS"/>
    <property type="molecule type" value="Genomic_DNA"/>
</dbReference>
<dbReference type="EMBL" id="AH001375">
    <property type="protein sequence ID" value="AAA34629.1"/>
    <property type="molecule type" value="Genomic_DNA"/>
</dbReference>
<dbReference type="EMBL" id="AH001375">
    <property type="protein sequence ID" value="AAA34630.1"/>
    <property type="molecule type" value="Genomic_DNA"/>
</dbReference>
<dbReference type="EMBL" id="BK006936">
    <property type="protein sequence ID" value="DAA07141.1"/>
    <property type="molecule type" value="Genomic_DNA"/>
</dbReference>
<dbReference type="PIR" id="S45875">
    <property type="entry name" value="XEBYUG"/>
</dbReference>
<dbReference type="RefSeq" id="NP_009575.1">
    <property type="nucleotide sequence ID" value="NM_001178367.1"/>
</dbReference>
<dbReference type="PDB" id="1Z45">
    <property type="method" value="X-ray"/>
    <property type="resolution" value="1.85 A"/>
    <property type="chains" value="A=1-699"/>
</dbReference>
<dbReference type="PDBsum" id="1Z45"/>
<dbReference type="SMR" id="P04397"/>
<dbReference type="BioGRID" id="32722">
    <property type="interactions" value="115"/>
</dbReference>
<dbReference type="DIP" id="DIP-4891N"/>
<dbReference type="FunCoup" id="P04397">
    <property type="interactions" value="651"/>
</dbReference>
<dbReference type="IntAct" id="P04397">
    <property type="interactions" value="44"/>
</dbReference>
<dbReference type="MINT" id="P04397"/>
<dbReference type="STRING" id="4932.YBR019C"/>
<dbReference type="GlyGen" id="P04397">
    <property type="glycosylation" value="1 site"/>
</dbReference>
<dbReference type="iPTMnet" id="P04397"/>
<dbReference type="PaxDb" id="4932-YBR019C"/>
<dbReference type="PeptideAtlas" id="P04397"/>
<dbReference type="TopDownProteomics" id="P04397"/>
<dbReference type="EnsemblFungi" id="YBR019C_mRNA">
    <property type="protein sequence ID" value="YBR019C"/>
    <property type="gene ID" value="YBR019C"/>
</dbReference>
<dbReference type="GeneID" id="852307"/>
<dbReference type="KEGG" id="sce:YBR019C"/>
<dbReference type="AGR" id="SGD:S000000223"/>
<dbReference type="SGD" id="S000000223">
    <property type="gene designation" value="GAL10"/>
</dbReference>
<dbReference type="VEuPathDB" id="FungiDB:YBR019C"/>
<dbReference type="eggNOG" id="KOG1371">
    <property type="taxonomic scope" value="Eukaryota"/>
</dbReference>
<dbReference type="eggNOG" id="KOG1604">
    <property type="taxonomic scope" value="Eukaryota"/>
</dbReference>
<dbReference type="GeneTree" id="ENSGT00940000158000"/>
<dbReference type="HOGENOM" id="CLU_007383_22_0_1"/>
<dbReference type="InParanoid" id="P04397"/>
<dbReference type="OMA" id="KGLYREW"/>
<dbReference type="OrthoDB" id="9402762at2759"/>
<dbReference type="BioCyc" id="YEAST:YBR019C-MONOMER"/>
<dbReference type="BRENDA" id="5.1.3.2">
    <property type="organism ID" value="984"/>
</dbReference>
<dbReference type="Reactome" id="R-SCE-70370">
    <property type="pathway name" value="Galactose catabolism"/>
</dbReference>
<dbReference type="UniPathway" id="UPA00214"/>
<dbReference type="UniPathway" id="UPA00242"/>
<dbReference type="BioGRID-ORCS" id="852307">
    <property type="hits" value="1 hit in 10 CRISPR screens"/>
</dbReference>
<dbReference type="EvolutionaryTrace" id="P04397"/>
<dbReference type="PRO" id="PR:P04397"/>
<dbReference type="Proteomes" id="UP000002311">
    <property type="component" value="Chromosome II"/>
</dbReference>
<dbReference type="RNAct" id="P04397">
    <property type="molecule type" value="protein"/>
</dbReference>
<dbReference type="GO" id="GO:0005829">
    <property type="term" value="C:cytosol"/>
    <property type="evidence" value="ECO:0000314"/>
    <property type="project" value="SGD"/>
</dbReference>
<dbReference type="GO" id="GO:0004034">
    <property type="term" value="F:aldose 1-epimerase activity"/>
    <property type="evidence" value="ECO:0000314"/>
    <property type="project" value="SGD"/>
</dbReference>
<dbReference type="GO" id="GO:0030246">
    <property type="term" value="F:carbohydrate binding"/>
    <property type="evidence" value="ECO:0007669"/>
    <property type="project" value="InterPro"/>
</dbReference>
<dbReference type="GO" id="GO:0003978">
    <property type="term" value="F:UDP-glucose 4-epimerase activity"/>
    <property type="evidence" value="ECO:0000314"/>
    <property type="project" value="SGD"/>
</dbReference>
<dbReference type="GO" id="GO:0033499">
    <property type="term" value="P:galactose catabolic process via UDP-galactose, Leloir pathway"/>
    <property type="evidence" value="ECO:0000314"/>
    <property type="project" value="SGD"/>
</dbReference>
<dbReference type="GO" id="GO:0005996">
    <property type="term" value="P:monosaccharide metabolic process"/>
    <property type="evidence" value="ECO:0000318"/>
    <property type="project" value="GO_Central"/>
</dbReference>
<dbReference type="CDD" id="cd09019">
    <property type="entry name" value="galactose_mutarotase_like"/>
    <property type="match status" value="1"/>
</dbReference>
<dbReference type="CDD" id="cd05247">
    <property type="entry name" value="UDP_G4E_1_SDR_e"/>
    <property type="match status" value="1"/>
</dbReference>
<dbReference type="FunFam" id="2.70.98.10:FF:000025">
    <property type="entry name" value="GAL10 bifunctional protein"/>
    <property type="match status" value="1"/>
</dbReference>
<dbReference type="Gene3D" id="2.70.98.10">
    <property type="match status" value="1"/>
</dbReference>
<dbReference type="Gene3D" id="3.40.50.720">
    <property type="entry name" value="NAD(P)-binding Rossmann-like Domain"/>
    <property type="match status" value="1"/>
</dbReference>
<dbReference type="Gene3D" id="3.90.25.10">
    <property type="entry name" value="UDP-galactose 4-epimerase, domain 1"/>
    <property type="match status" value="1"/>
</dbReference>
<dbReference type="InterPro" id="IPR018052">
    <property type="entry name" value="Ald1_epimerase_CS"/>
</dbReference>
<dbReference type="InterPro" id="IPR008183">
    <property type="entry name" value="Aldose_1/G6P_1-epimerase"/>
</dbReference>
<dbReference type="InterPro" id="IPR011013">
    <property type="entry name" value="Gal_mutarotase_sf_dom"/>
</dbReference>
<dbReference type="InterPro" id="IPR047215">
    <property type="entry name" value="Galactose_mutarotase-like"/>
</dbReference>
<dbReference type="InterPro" id="IPR014718">
    <property type="entry name" value="GH-type_carb-bd"/>
</dbReference>
<dbReference type="InterPro" id="IPR016040">
    <property type="entry name" value="NAD(P)-bd_dom"/>
</dbReference>
<dbReference type="InterPro" id="IPR036291">
    <property type="entry name" value="NAD(P)-bd_dom_sf"/>
</dbReference>
<dbReference type="InterPro" id="IPR005886">
    <property type="entry name" value="UDP_G4E"/>
</dbReference>
<dbReference type="NCBIfam" id="TIGR01179">
    <property type="entry name" value="galE"/>
    <property type="match status" value="1"/>
</dbReference>
<dbReference type="NCBIfam" id="NF007956">
    <property type="entry name" value="PRK10675.1"/>
    <property type="match status" value="1"/>
</dbReference>
<dbReference type="PANTHER" id="PTHR43725">
    <property type="entry name" value="UDP-GLUCOSE 4-EPIMERASE"/>
    <property type="match status" value="1"/>
</dbReference>
<dbReference type="PANTHER" id="PTHR43725:SF47">
    <property type="entry name" value="UDP-GLUCOSE 4-EPIMERASE"/>
    <property type="match status" value="1"/>
</dbReference>
<dbReference type="Pfam" id="PF01263">
    <property type="entry name" value="Aldose_epim"/>
    <property type="match status" value="1"/>
</dbReference>
<dbReference type="Pfam" id="PF16363">
    <property type="entry name" value="GDP_Man_Dehyd"/>
    <property type="match status" value="1"/>
</dbReference>
<dbReference type="SUPFAM" id="SSF74650">
    <property type="entry name" value="Galactose mutarotase-like"/>
    <property type="match status" value="1"/>
</dbReference>
<dbReference type="SUPFAM" id="SSF51735">
    <property type="entry name" value="NAD(P)-binding Rossmann-fold domains"/>
    <property type="match status" value="1"/>
</dbReference>
<dbReference type="PROSITE" id="PS00545">
    <property type="entry name" value="ALDOSE_1_EPIMERASE"/>
    <property type="match status" value="1"/>
</dbReference>
<evidence type="ECO:0000250" key="1"/>
<evidence type="ECO:0000255" key="2"/>
<evidence type="ECO:0000255" key="3">
    <source>
        <dbReference type="PROSITE-ProRule" id="PRU10126"/>
    </source>
</evidence>
<evidence type="ECO:0000305" key="4"/>
<evidence type="ECO:0007744" key="5">
    <source>
    </source>
</evidence>
<evidence type="ECO:0007829" key="6">
    <source>
        <dbReference type="PDB" id="1Z45"/>
    </source>
</evidence>